<organism>
    <name type="scientific">Candida albicans (strain SC5314 / ATCC MYA-2876)</name>
    <name type="common">Yeast</name>
    <dbReference type="NCBI Taxonomy" id="237561"/>
    <lineage>
        <taxon>Eukaryota</taxon>
        <taxon>Fungi</taxon>
        <taxon>Dikarya</taxon>
        <taxon>Ascomycota</taxon>
        <taxon>Saccharomycotina</taxon>
        <taxon>Pichiomycetes</taxon>
        <taxon>Debaryomycetaceae</taxon>
        <taxon>Candida/Lodderomyces clade</taxon>
        <taxon>Candida</taxon>
    </lineage>
</organism>
<comment type="function">
    <text evidence="1">ATP-binding RNA helicase involved in the biogenesis of 60S ribosomal subunits and is required for the normal formation of 25S and 5.8S rRNAs.</text>
</comment>
<comment type="catalytic activity">
    <reaction>
        <text>ATP + H2O = ADP + phosphate + H(+)</text>
        <dbReference type="Rhea" id="RHEA:13065"/>
        <dbReference type="ChEBI" id="CHEBI:15377"/>
        <dbReference type="ChEBI" id="CHEBI:15378"/>
        <dbReference type="ChEBI" id="CHEBI:30616"/>
        <dbReference type="ChEBI" id="CHEBI:43474"/>
        <dbReference type="ChEBI" id="CHEBI:456216"/>
        <dbReference type="EC" id="3.6.4.13"/>
    </reaction>
</comment>
<comment type="subcellular location">
    <subcellularLocation>
        <location evidence="1">Nucleus</location>
        <location evidence="1">Nucleolus</location>
    </subcellularLocation>
</comment>
<comment type="domain">
    <text>The Q motif is unique to and characteristic of the DEAD box family of RNA helicases and controls ATP binding and hydrolysis.</text>
</comment>
<comment type="miscellaneous">
    <text>Present with 1460 molecules/cell in log phase SD medium.</text>
</comment>
<comment type="similarity">
    <text evidence="5">Belongs to the DEAD box helicase family. DDX31/DBP7 subfamily.</text>
</comment>
<evidence type="ECO:0000250" key="1"/>
<evidence type="ECO:0000255" key="2">
    <source>
        <dbReference type="PROSITE-ProRule" id="PRU00541"/>
    </source>
</evidence>
<evidence type="ECO:0000255" key="3">
    <source>
        <dbReference type="PROSITE-ProRule" id="PRU00542"/>
    </source>
</evidence>
<evidence type="ECO:0000256" key="4">
    <source>
        <dbReference type="SAM" id="MobiDB-lite"/>
    </source>
</evidence>
<evidence type="ECO:0000305" key="5"/>
<feature type="chain" id="PRO_0000232252" description="ATP-dependent RNA helicase DBP7">
    <location>
        <begin position="1"/>
        <end position="727"/>
    </location>
</feature>
<feature type="domain" description="Helicase ATP-binding" evidence="2">
    <location>
        <begin position="168"/>
        <end position="363"/>
    </location>
</feature>
<feature type="domain" description="Helicase C-terminal" evidence="3">
    <location>
        <begin position="406"/>
        <end position="613"/>
    </location>
</feature>
<feature type="region of interest" description="Disordered" evidence="4">
    <location>
        <begin position="14"/>
        <end position="119"/>
    </location>
</feature>
<feature type="region of interest" description="Disordered" evidence="4">
    <location>
        <begin position="683"/>
        <end position="727"/>
    </location>
</feature>
<feature type="short sequence motif" description="Q motif">
    <location>
        <begin position="135"/>
        <end position="164"/>
    </location>
</feature>
<feature type="short sequence motif" description="DEAD box">
    <location>
        <begin position="295"/>
        <end position="298"/>
    </location>
</feature>
<feature type="compositionally biased region" description="Polar residues" evidence="4">
    <location>
        <begin position="15"/>
        <end position="28"/>
    </location>
</feature>
<feature type="compositionally biased region" description="Basic and acidic residues" evidence="4">
    <location>
        <begin position="63"/>
        <end position="94"/>
    </location>
</feature>
<feature type="compositionally biased region" description="Polar residues" evidence="4">
    <location>
        <begin position="99"/>
        <end position="119"/>
    </location>
</feature>
<feature type="compositionally biased region" description="Basic and acidic residues" evidence="4">
    <location>
        <begin position="697"/>
        <end position="708"/>
    </location>
</feature>
<feature type="binding site" evidence="2">
    <location>
        <begin position="181"/>
        <end position="188"/>
    </location>
    <ligand>
        <name>ATP</name>
        <dbReference type="ChEBI" id="CHEBI:30616"/>
    </ligand>
</feature>
<accession>Q59S50</accession>
<accession>A0A1D8PQS9</accession>
<accession>Q3MPL8</accession>
<dbReference type="EC" id="3.6.4.13"/>
<dbReference type="EMBL" id="AP006852">
    <property type="protein sequence ID" value="BAE44642.1"/>
    <property type="molecule type" value="Genomic_DNA"/>
</dbReference>
<dbReference type="EMBL" id="CP017629">
    <property type="protein sequence ID" value="AOW30490.1"/>
    <property type="molecule type" value="Genomic_DNA"/>
</dbReference>
<dbReference type="RefSeq" id="XP_712474.1">
    <property type="nucleotide sequence ID" value="XM_707381.1"/>
</dbReference>
<dbReference type="SMR" id="Q59S50"/>
<dbReference type="BioGRID" id="1228996">
    <property type="interactions" value="1"/>
</dbReference>
<dbReference type="FunCoup" id="Q59S50">
    <property type="interactions" value="820"/>
</dbReference>
<dbReference type="STRING" id="237561.Q59S50"/>
<dbReference type="EnsemblFungi" id="C7_01200C_A-T">
    <property type="protein sequence ID" value="C7_01200C_A-T-p1"/>
    <property type="gene ID" value="C7_01200C_A"/>
</dbReference>
<dbReference type="GeneID" id="3645903"/>
<dbReference type="KEGG" id="cal:CAALFM_C701200CA"/>
<dbReference type="CGD" id="CAL0000199731">
    <property type="gene designation" value="DBP7"/>
</dbReference>
<dbReference type="VEuPathDB" id="FungiDB:C7_01200C_A"/>
<dbReference type="eggNOG" id="KOG0348">
    <property type="taxonomic scope" value="Eukaryota"/>
</dbReference>
<dbReference type="HOGENOM" id="CLU_003041_26_2_1"/>
<dbReference type="InParanoid" id="Q59S50"/>
<dbReference type="OMA" id="AVHIKAD"/>
<dbReference type="OrthoDB" id="422663at2759"/>
<dbReference type="Proteomes" id="UP000000559">
    <property type="component" value="Chromosome 7"/>
</dbReference>
<dbReference type="GO" id="GO:0005730">
    <property type="term" value="C:nucleolus"/>
    <property type="evidence" value="ECO:0007669"/>
    <property type="project" value="UniProtKB-SubCell"/>
</dbReference>
<dbReference type="GO" id="GO:0005634">
    <property type="term" value="C:nucleus"/>
    <property type="evidence" value="ECO:0000318"/>
    <property type="project" value="GO_Central"/>
</dbReference>
<dbReference type="GO" id="GO:0005524">
    <property type="term" value="F:ATP binding"/>
    <property type="evidence" value="ECO:0007669"/>
    <property type="project" value="UniProtKB-KW"/>
</dbReference>
<dbReference type="GO" id="GO:0016887">
    <property type="term" value="F:ATP hydrolysis activity"/>
    <property type="evidence" value="ECO:0007669"/>
    <property type="project" value="RHEA"/>
</dbReference>
<dbReference type="GO" id="GO:0003723">
    <property type="term" value="F:RNA binding"/>
    <property type="evidence" value="ECO:0007669"/>
    <property type="project" value="UniProtKB-KW"/>
</dbReference>
<dbReference type="GO" id="GO:0003724">
    <property type="term" value="F:RNA helicase activity"/>
    <property type="evidence" value="ECO:0007669"/>
    <property type="project" value="UniProtKB-EC"/>
</dbReference>
<dbReference type="GO" id="GO:0000464">
    <property type="term" value="P:endonucleolytic cleavage in ITS1 upstream of 5.8S rRNA from tricistronic rRNA transcript (SSU-rRNA, 5.8S rRNA, LSU-rRNA)"/>
    <property type="evidence" value="ECO:0007669"/>
    <property type="project" value="EnsemblFungi"/>
</dbReference>
<dbReference type="GO" id="GO:0042254">
    <property type="term" value="P:ribosome biogenesis"/>
    <property type="evidence" value="ECO:0000318"/>
    <property type="project" value="GO_Central"/>
</dbReference>
<dbReference type="CDD" id="cd17949">
    <property type="entry name" value="DEADc_DDX31"/>
    <property type="match status" value="1"/>
</dbReference>
<dbReference type="CDD" id="cd18787">
    <property type="entry name" value="SF2_C_DEAD"/>
    <property type="match status" value="1"/>
</dbReference>
<dbReference type="Gene3D" id="3.40.50.300">
    <property type="entry name" value="P-loop containing nucleotide triphosphate hydrolases"/>
    <property type="match status" value="2"/>
</dbReference>
<dbReference type="InterPro" id="IPR011545">
    <property type="entry name" value="DEAD/DEAH_box_helicase_dom"/>
</dbReference>
<dbReference type="InterPro" id="IPR014001">
    <property type="entry name" value="Helicase_ATP-bd"/>
</dbReference>
<dbReference type="InterPro" id="IPR001650">
    <property type="entry name" value="Helicase_C-like"/>
</dbReference>
<dbReference type="InterPro" id="IPR027417">
    <property type="entry name" value="P-loop_NTPase"/>
</dbReference>
<dbReference type="InterPro" id="IPR014014">
    <property type="entry name" value="RNA_helicase_DEAD_Q_motif"/>
</dbReference>
<dbReference type="InterPro" id="IPR025313">
    <property type="entry name" value="SPB4-like_CTE"/>
</dbReference>
<dbReference type="PANTHER" id="PTHR24031">
    <property type="entry name" value="RNA HELICASE"/>
    <property type="match status" value="1"/>
</dbReference>
<dbReference type="Pfam" id="PF13959">
    <property type="entry name" value="CTE_SPB4"/>
    <property type="match status" value="1"/>
</dbReference>
<dbReference type="Pfam" id="PF00270">
    <property type="entry name" value="DEAD"/>
    <property type="match status" value="1"/>
</dbReference>
<dbReference type="Pfam" id="PF00271">
    <property type="entry name" value="Helicase_C"/>
    <property type="match status" value="1"/>
</dbReference>
<dbReference type="SMART" id="SM00487">
    <property type="entry name" value="DEXDc"/>
    <property type="match status" value="1"/>
</dbReference>
<dbReference type="SMART" id="SM01178">
    <property type="entry name" value="DUF4217"/>
    <property type="match status" value="1"/>
</dbReference>
<dbReference type="SMART" id="SM00490">
    <property type="entry name" value="HELICc"/>
    <property type="match status" value="1"/>
</dbReference>
<dbReference type="SUPFAM" id="SSF52540">
    <property type="entry name" value="P-loop containing nucleoside triphosphate hydrolases"/>
    <property type="match status" value="2"/>
</dbReference>
<dbReference type="PROSITE" id="PS51192">
    <property type="entry name" value="HELICASE_ATP_BIND_1"/>
    <property type="match status" value="1"/>
</dbReference>
<dbReference type="PROSITE" id="PS51194">
    <property type="entry name" value="HELICASE_CTER"/>
    <property type="match status" value="1"/>
</dbReference>
<dbReference type="PROSITE" id="PS51195">
    <property type="entry name" value="Q_MOTIF"/>
    <property type="match status" value="1"/>
</dbReference>
<sequence length="727" mass="81139">MDDDDELLLNFAAPDTSSVAASKNQNVKVSGGRWKDRRKLQLALQGRTKKRQPETGVNLIPVDESKRKRDSEDKVQLDSNKRSKFTESKGENGGKGDSYVSSLFTNNQPTSHLAPTSTTKELTYLPSNAPMKDATNFSGLGLNEKLSIHLTDHLRFMHPTKIQQLVIPSLISTENDLFVKAQTGSGKTLAFVLPIFHKLMRENKFKINRESGLFAIILTPTRELATQIYGVLETLTRCHHWIVPGIVIGGEKKKSEKARLRKGCNILVATPGRLADHLENTKTLDISQLRWLVLDEGDKLMELGFEDTIAQITAKIDSNSKIADTAEKWQGLPSRRINMLCSATLHSNVKKLGSIVLKDPEMISVETASVAGTVSFDETIATTTSTAPDQLIQNVVVVPPKLRLVTLDALLLKISKHSAERTIVFFSCSDSVDFHFDVFTRDGKKFKKVTDEETGEVKTVLVSPEDDENDGLLTAPQLSDNTIIYKLHGSLSQQTRASTLQSFVKDNNSYNKILFCTDVASRGLDLPNVANVIEYDPPFTIDDHLHRIGRSARLGNEGNATLFLLPGIEEGYVDGKLRVAHPREGNLRVKNYEKILQEGFAQGNIKSKDNKLGKWDIHATTWHLDVERWLLEDQASHDEAVRAFTSHIRAYATHLSSEREFFNVKLLHLGHLAKSFGLRETPKKLGKSVGNNSNYSESKKGKKEDPRKKMLRMAKMAVKSASSEFNY</sequence>
<reference key="1">
    <citation type="journal article" date="2005" name="Genetics">
        <title>Sequence finishing and gene mapping for Candida albicans chromosome 7 and syntenic analysis against the Saccharomyces cerevisiae genome.</title>
        <authorList>
            <person name="Chibana H."/>
            <person name="Oka N."/>
            <person name="Nakayama H."/>
            <person name="Aoyama T."/>
            <person name="Magee B.B."/>
            <person name="Magee P.T."/>
            <person name="Mikami Y."/>
        </authorList>
    </citation>
    <scope>NUCLEOTIDE SEQUENCE [LARGE SCALE GENOMIC DNA]</scope>
    <source>
        <strain>SC5314 / ATCC MYA-2876</strain>
    </source>
</reference>
<reference key="2">
    <citation type="journal article" date="2004" name="Proc. Natl. Acad. Sci. U.S.A.">
        <title>The diploid genome sequence of Candida albicans.</title>
        <authorList>
            <person name="Jones T."/>
            <person name="Federspiel N.A."/>
            <person name="Chibana H."/>
            <person name="Dungan J."/>
            <person name="Kalman S."/>
            <person name="Magee B.B."/>
            <person name="Newport G."/>
            <person name="Thorstenson Y.R."/>
            <person name="Agabian N."/>
            <person name="Magee P.T."/>
            <person name="Davis R.W."/>
            <person name="Scherer S."/>
        </authorList>
    </citation>
    <scope>NUCLEOTIDE SEQUENCE [LARGE SCALE GENOMIC DNA]</scope>
    <source>
        <strain>SC5314 / ATCC MYA-2876</strain>
    </source>
</reference>
<reference key="3">
    <citation type="journal article" date="2007" name="Genome Biol.">
        <title>Assembly of the Candida albicans genome into sixteen supercontigs aligned on the eight chromosomes.</title>
        <authorList>
            <person name="van het Hoog M."/>
            <person name="Rast T.J."/>
            <person name="Martchenko M."/>
            <person name="Grindle S."/>
            <person name="Dignard D."/>
            <person name="Hogues H."/>
            <person name="Cuomo C."/>
            <person name="Berriman M."/>
            <person name="Scherer S."/>
            <person name="Magee B.B."/>
            <person name="Whiteway M."/>
            <person name="Chibana H."/>
            <person name="Nantel A."/>
            <person name="Magee P.T."/>
        </authorList>
    </citation>
    <scope>GENOME REANNOTATION</scope>
    <source>
        <strain>SC5314 / ATCC MYA-2876</strain>
    </source>
</reference>
<reference key="4">
    <citation type="journal article" date="2013" name="Genome Biol.">
        <title>Assembly of a phased diploid Candida albicans genome facilitates allele-specific measurements and provides a simple model for repeat and indel structure.</title>
        <authorList>
            <person name="Muzzey D."/>
            <person name="Schwartz K."/>
            <person name="Weissman J.S."/>
            <person name="Sherlock G."/>
        </authorList>
    </citation>
    <scope>NUCLEOTIDE SEQUENCE [LARGE SCALE GENOMIC DNA]</scope>
    <scope>GENOME REANNOTATION</scope>
    <source>
        <strain>SC5314 / ATCC MYA-2876</strain>
    </source>
</reference>
<name>DBP7_CANAL</name>
<protein>
    <recommendedName>
        <fullName>ATP-dependent RNA helicase DBP7</fullName>
        <ecNumber>3.6.4.13</ecNumber>
    </recommendedName>
</protein>
<proteinExistence type="inferred from homology"/>
<keyword id="KW-0067">ATP-binding</keyword>
<keyword id="KW-0347">Helicase</keyword>
<keyword id="KW-0378">Hydrolase</keyword>
<keyword id="KW-0547">Nucleotide-binding</keyword>
<keyword id="KW-0539">Nucleus</keyword>
<keyword id="KW-1185">Reference proteome</keyword>
<keyword id="KW-0690">Ribosome biogenesis</keyword>
<keyword id="KW-0694">RNA-binding</keyword>
<keyword id="KW-0698">rRNA processing</keyword>
<gene>
    <name type="primary">DBP7</name>
    <name type="ordered locus">CAALFM_C701200CA</name>
    <name type="ORF">CaJ7.0136</name>
    <name type="ORF">CaO19.6902</name>
</gene>